<protein>
    <recommendedName>
        <fullName evidence="3">4-hydroxybenzoate 3-monooxygenase (NAD(P)H)</fullName>
        <ecNumber evidence="2">1.14.13.33</ecNumber>
    </recommendedName>
    <alternativeName>
        <fullName evidence="3">4-hydroxybenzoate 3-hydroxylase</fullName>
        <shortName evidence="3">4HB 3-hydroxylase</shortName>
    </alternativeName>
</protein>
<dbReference type="EC" id="1.14.13.33" evidence="2"/>
<dbReference type="EMBL" id="AB505864">
    <property type="protein sequence ID" value="BAH79107.1"/>
    <property type="molecule type" value="Genomic_DNA"/>
</dbReference>
<dbReference type="PDB" id="7ON9">
    <property type="method" value="X-ray"/>
    <property type="resolution" value="1.63 A"/>
    <property type="chains" value="A/B/C/D=1-394"/>
</dbReference>
<dbReference type="PDBsum" id="7ON9"/>
<dbReference type="SMR" id="C4TP09"/>
<dbReference type="GO" id="GO:0106355">
    <property type="term" value="F:4-hydroxybenzoate 3-monooxygenase (NADH) activity"/>
    <property type="evidence" value="ECO:0007669"/>
    <property type="project" value="RHEA"/>
</dbReference>
<dbReference type="GO" id="GO:0106356">
    <property type="term" value="F:4-hydroxybenzoate 3-monooxygenase (NADPH) activity"/>
    <property type="evidence" value="ECO:0007669"/>
    <property type="project" value="RHEA"/>
</dbReference>
<dbReference type="GO" id="GO:0018671">
    <property type="term" value="F:4-hydroxybenzoate 3-monooxygenase [NAD(P)H] activity"/>
    <property type="evidence" value="ECO:0000314"/>
    <property type="project" value="UniProtKB"/>
</dbReference>
<dbReference type="GO" id="GO:0018659">
    <property type="term" value="F:4-hydroxybenzoate 3-monooxygenase activity"/>
    <property type="evidence" value="ECO:0007669"/>
    <property type="project" value="InterPro"/>
</dbReference>
<dbReference type="GO" id="GO:0071949">
    <property type="term" value="F:FAD binding"/>
    <property type="evidence" value="ECO:0000314"/>
    <property type="project" value="UniProtKB"/>
</dbReference>
<dbReference type="GO" id="GO:0050660">
    <property type="term" value="F:flavin adenine dinucleotide binding"/>
    <property type="evidence" value="ECO:0000314"/>
    <property type="project" value="UniProtKB"/>
</dbReference>
<dbReference type="GO" id="GO:0043639">
    <property type="term" value="P:benzoate catabolic process"/>
    <property type="evidence" value="ECO:0007669"/>
    <property type="project" value="InterPro"/>
</dbReference>
<dbReference type="Gene3D" id="3.30.9.10">
    <property type="entry name" value="D-Amino Acid Oxidase, subunit A, domain 2"/>
    <property type="match status" value="1"/>
</dbReference>
<dbReference type="Gene3D" id="3.50.50.60">
    <property type="entry name" value="FAD/NAD(P)-binding domain"/>
    <property type="match status" value="1"/>
</dbReference>
<dbReference type="InterPro" id="IPR002938">
    <property type="entry name" value="FAD-bd"/>
</dbReference>
<dbReference type="InterPro" id="IPR036188">
    <property type="entry name" value="FAD/NAD-bd_sf"/>
</dbReference>
<dbReference type="InterPro" id="IPR012733">
    <property type="entry name" value="HB_mOase"/>
</dbReference>
<dbReference type="InterPro" id="IPR050641">
    <property type="entry name" value="RIFMO-like"/>
</dbReference>
<dbReference type="NCBIfam" id="TIGR02360">
    <property type="entry name" value="pbenz_hydroxyl"/>
    <property type="match status" value="1"/>
</dbReference>
<dbReference type="NCBIfam" id="NF006091">
    <property type="entry name" value="PRK08243.1"/>
    <property type="match status" value="1"/>
</dbReference>
<dbReference type="PANTHER" id="PTHR43004:SF3">
    <property type="entry name" value="P-HYDROXYBENZOATE HYDROXYLASE"/>
    <property type="match status" value="1"/>
</dbReference>
<dbReference type="PANTHER" id="PTHR43004">
    <property type="entry name" value="TRK SYSTEM POTASSIUM UPTAKE PROTEIN"/>
    <property type="match status" value="1"/>
</dbReference>
<dbReference type="Pfam" id="PF01494">
    <property type="entry name" value="FAD_binding_3"/>
    <property type="match status" value="1"/>
</dbReference>
<dbReference type="PRINTS" id="PR00420">
    <property type="entry name" value="RNGMNOXGNASE"/>
</dbReference>
<dbReference type="SUPFAM" id="SSF54373">
    <property type="entry name" value="FAD-linked reductases, C-terminal domain"/>
    <property type="match status" value="1"/>
</dbReference>
<dbReference type="SUPFAM" id="SSF51905">
    <property type="entry name" value="FAD/NAD(P)-binding domain"/>
    <property type="match status" value="1"/>
</dbReference>
<reference key="1">
    <citation type="journal article" date="2009" name="J. Bacteriol.">
        <title>Uncovering the protocatechuate 2,3-cleavage pathway genes.</title>
        <authorList>
            <person name="Kasai D."/>
            <person name="Fujinami T."/>
            <person name="Abe T."/>
            <person name="Mase K."/>
            <person name="Katayama Y."/>
            <person name="Fukuda M."/>
            <person name="Masai E."/>
        </authorList>
    </citation>
    <scope>NUCLEOTIDE SEQUENCE [GENOMIC DNA]</scope>
    <scope>FUNCTION</scope>
    <scope>CATALYTIC ACTIVITY</scope>
    <scope>SUBSTRATE SPECIFICITY</scope>
    <source>
        <strain>JJ-1b</strain>
    </source>
</reference>
<keyword id="KW-0002">3D-structure</keyword>
<keyword id="KW-0058">Aromatic hydrocarbons catabolism</keyword>
<keyword id="KW-0274">FAD</keyword>
<keyword id="KW-0285">Flavoprotein</keyword>
<keyword id="KW-0503">Monooxygenase</keyword>
<keyword id="KW-0520">NAD</keyword>
<keyword id="KW-0521">NADP</keyword>
<keyword id="KW-0560">Oxidoreductase</keyword>
<evidence type="ECO:0000250" key="1">
    <source>
        <dbReference type="UniProtKB" id="P20586"/>
    </source>
</evidence>
<evidence type="ECO:0000269" key="2">
    <source>
    </source>
</evidence>
<evidence type="ECO:0000303" key="3">
    <source>
    </source>
</evidence>
<evidence type="ECO:0000305" key="4"/>
<evidence type="ECO:0000305" key="5">
    <source>
    </source>
</evidence>
<evidence type="ECO:0007829" key="6">
    <source>
        <dbReference type="PDB" id="7ON9"/>
    </source>
</evidence>
<feature type="chain" id="PRO_0000435797" description="4-hydroxybenzoate 3-monooxygenase (NAD(P)H)">
    <location>
        <begin position="1"/>
        <end position="394"/>
    </location>
</feature>
<feature type="binding site" evidence="1">
    <location>
        <position position="32"/>
    </location>
    <ligand>
        <name>FAD</name>
        <dbReference type="ChEBI" id="CHEBI:57692"/>
    </ligand>
</feature>
<feature type="binding site" evidence="1">
    <location>
        <begin position="42"/>
        <end position="47"/>
    </location>
    <ligand>
        <name>FAD</name>
        <dbReference type="ChEBI" id="CHEBI:57692"/>
    </ligand>
</feature>
<feature type="binding site" evidence="1">
    <location>
        <position position="102"/>
    </location>
    <ligand>
        <name>FAD</name>
        <dbReference type="ChEBI" id="CHEBI:57692"/>
    </ligand>
</feature>
<feature type="binding site" evidence="1">
    <location>
        <position position="203"/>
    </location>
    <ligand>
        <name>substrate</name>
    </ligand>
</feature>
<feature type="binding site" evidence="1">
    <location>
        <begin position="214"/>
        <end position="216"/>
    </location>
    <ligand>
        <name>substrate</name>
    </ligand>
</feature>
<feature type="binding site" evidence="1">
    <location>
        <position position="224"/>
    </location>
    <ligand>
        <name>substrate</name>
    </ligand>
</feature>
<feature type="binding site" evidence="1">
    <location>
        <position position="288"/>
    </location>
    <ligand>
        <name>FAD</name>
        <dbReference type="ChEBI" id="CHEBI:57692"/>
    </ligand>
</feature>
<feature type="binding site" evidence="1">
    <location>
        <position position="295"/>
    </location>
    <ligand>
        <name>substrate</name>
    </ligand>
</feature>
<feature type="binding site" evidence="1">
    <location>
        <begin position="301"/>
        <end position="302"/>
    </location>
    <ligand>
        <name>FAD</name>
        <dbReference type="ChEBI" id="CHEBI:57692"/>
    </ligand>
</feature>
<feature type="site" description="Important for catalytic activity" evidence="1">
    <location>
        <position position="203"/>
    </location>
</feature>
<feature type="site" description="Important for catalytic activity" evidence="1">
    <location>
        <position position="387"/>
    </location>
</feature>
<feature type="strand" evidence="6">
    <location>
        <begin position="4"/>
        <end position="8"/>
    </location>
</feature>
<feature type="helix" evidence="6">
    <location>
        <begin position="12"/>
        <end position="23"/>
    </location>
</feature>
<feature type="strand" evidence="6">
    <location>
        <begin position="28"/>
        <end position="31"/>
    </location>
</feature>
<feature type="helix" evidence="6">
    <location>
        <begin position="36"/>
        <end position="40"/>
    </location>
</feature>
<feature type="helix" evidence="6">
    <location>
        <begin position="50"/>
        <end position="58"/>
    </location>
</feature>
<feature type="helix" evidence="6">
    <location>
        <begin position="63"/>
        <end position="68"/>
    </location>
</feature>
<feature type="strand" evidence="6">
    <location>
        <begin position="69"/>
        <end position="73"/>
    </location>
</feature>
<feature type="strand" evidence="6">
    <location>
        <begin position="75"/>
        <end position="79"/>
    </location>
</feature>
<feature type="strand" evidence="6">
    <location>
        <begin position="82"/>
        <end position="86"/>
    </location>
</feature>
<feature type="helix" evidence="6">
    <location>
        <begin position="88"/>
        <end position="91"/>
    </location>
</feature>
<feature type="strand" evidence="6">
    <location>
        <begin position="97"/>
        <end position="99"/>
    </location>
</feature>
<feature type="helix" evidence="6">
    <location>
        <begin position="102"/>
        <end position="115"/>
    </location>
</feature>
<feature type="strand" evidence="6">
    <location>
        <begin position="119"/>
        <end position="121"/>
    </location>
</feature>
<feature type="strand" evidence="6">
    <location>
        <begin position="125"/>
        <end position="130"/>
    </location>
</feature>
<feature type="strand" evidence="6">
    <location>
        <begin position="134"/>
        <end position="136"/>
    </location>
</feature>
<feature type="strand" evidence="6">
    <location>
        <begin position="138"/>
        <end position="142"/>
    </location>
</feature>
<feature type="turn" evidence="6">
    <location>
        <begin position="143"/>
        <end position="146"/>
    </location>
</feature>
<feature type="strand" evidence="6">
    <location>
        <begin position="150"/>
        <end position="153"/>
    </location>
</feature>
<feature type="strand" evidence="6">
    <location>
        <begin position="155"/>
        <end position="159"/>
    </location>
</feature>
<feature type="helix" evidence="6">
    <location>
        <begin position="168"/>
        <end position="170"/>
    </location>
</feature>
<feature type="turn" evidence="6">
    <location>
        <begin position="173"/>
        <end position="175"/>
    </location>
</feature>
<feature type="strand" evidence="6">
    <location>
        <begin position="177"/>
        <end position="182"/>
    </location>
</feature>
<feature type="strand" evidence="6">
    <location>
        <begin position="184"/>
        <end position="194"/>
    </location>
</feature>
<feature type="strand" evidence="6">
    <location>
        <begin position="197"/>
        <end position="200"/>
    </location>
</feature>
<feature type="strand" evidence="6">
    <location>
        <begin position="202"/>
        <end position="206"/>
    </location>
</feature>
<feature type="strand" evidence="6">
    <location>
        <begin position="209"/>
        <end position="217"/>
    </location>
</feature>
<feature type="strand" evidence="6">
    <location>
        <begin position="220"/>
        <end position="228"/>
    </location>
</feature>
<feature type="helix" evidence="6">
    <location>
        <begin position="233"/>
        <end position="235"/>
    </location>
</feature>
<feature type="helix" evidence="6">
    <location>
        <begin position="238"/>
        <end position="249"/>
    </location>
</feature>
<feature type="strand" evidence="6">
    <location>
        <begin position="262"/>
        <end position="268"/>
    </location>
</feature>
<feature type="strand" evidence="6">
    <location>
        <begin position="271"/>
        <end position="276"/>
    </location>
</feature>
<feature type="strand" evidence="6">
    <location>
        <begin position="278"/>
        <end position="280"/>
    </location>
</feature>
<feature type="strand" evidence="6">
    <location>
        <begin position="283"/>
        <end position="285"/>
    </location>
</feature>
<feature type="helix" evidence="6">
    <location>
        <begin position="287"/>
        <end position="289"/>
    </location>
</feature>
<feature type="helix" evidence="6">
    <location>
        <begin position="295"/>
        <end position="297"/>
    </location>
</feature>
<feature type="helix" evidence="6">
    <location>
        <begin position="300"/>
        <end position="321"/>
    </location>
</feature>
<feature type="helix" evidence="6">
    <location>
        <begin position="325"/>
        <end position="328"/>
    </location>
</feature>
<feature type="helix" evidence="6">
    <location>
        <begin position="330"/>
        <end position="352"/>
    </location>
</feature>
<feature type="helix" evidence="6">
    <location>
        <begin position="360"/>
        <end position="373"/>
    </location>
</feature>
<feature type="helix" evidence="6">
    <location>
        <begin position="377"/>
        <end position="388"/>
    </location>
</feature>
<organism>
    <name type="scientific">Paenibacillus sp</name>
    <dbReference type="NCBI Taxonomy" id="58172"/>
    <lineage>
        <taxon>Bacteria</taxon>
        <taxon>Bacillati</taxon>
        <taxon>Bacillota</taxon>
        <taxon>Bacilli</taxon>
        <taxon>Bacillales</taxon>
        <taxon>Paenibacillaceae</taxon>
        <taxon>Paenibacillus</taxon>
    </lineage>
</organism>
<gene>
    <name type="primary">praI</name>
</gene>
<proteinExistence type="evidence at protein level"/>
<sequence>MRTQVGIIGAGPAGLLLSHLLYLQGIESIIIENRTREEIEGTIRAGVLEQGTVDLMNQMGVGARMMKEGHFHEGFELRFNGRGHRINVHELTGGKYVTVYAQHEVIKDLVAARLQTGGQIHFNVGDVSLHDVDTSSPKIRFRPNKDGELQEIECDFIAGCDGFRGPSRPAIPQSVRKEYQKVYPFSWLGILVEAPPSAHELIYANHERGFALVSTRSPQIQRLYLQVDAQDHIDNWSDDRIWSELHARLETRDGFKLLEGPIFQKGIVSMRSFVCDPMQHGRLFLAGDAAHIVPPTGAKGLNLAAADVQVLARGLEAYYKAGKMEILNRCTEICLRRIWKAERFSWFMTTMLHRDQGHTPFERGIQLAELDYVTSSRAASTSLAENYIGLPMEF</sequence>
<name>PRAI_PAESP</name>
<accession>C4TP09</accession>
<comment type="function">
    <text evidence="2">Involved in the degradation of 4-hydroxybenzoate (4HB) via the protocatechuate (PCA) 2,3-cleavage pathway. Catalyzes the conversion of 4HB into 2-hydroxypenta-2,4-dienoate (HPD). It is highly specific for 4-hydroxybenzoate, and is able to utilize both NADH and NADPH as electron donors at approximately equal rates.</text>
</comment>
<comment type="catalytic activity">
    <reaction evidence="2">
        <text>4-hydroxybenzoate + NADH + O2 + H(+) = 3,4-dihydroxybenzoate + NAD(+) + H2O</text>
        <dbReference type="Rhea" id="RHEA:19473"/>
        <dbReference type="ChEBI" id="CHEBI:15377"/>
        <dbReference type="ChEBI" id="CHEBI:15378"/>
        <dbReference type="ChEBI" id="CHEBI:15379"/>
        <dbReference type="ChEBI" id="CHEBI:17879"/>
        <dbReference type="ChEBI" id="CHEBI:36241"/>
        <dbReference type="ChEBI" id="CHEBI:57540"/>
        <dbReference type="ChEBI" id="CHEBI:57945"/>
        <dbReference type="EC" id="1.14.13.33"/>
    </reaction>
</comment>
<comment type="catalytic activity">
    <reaction evidence="2">
        <text>4-hydroxybenzoate + NADPH + O2 + H(+) = 3,4-dihydroxybenzoate + NADP(+) + H2O</text>
        <dbReference type="Rhea" id="RHEA:19477"/>
        <dbReference type="ChEBI" id="CHEBI:15377"/>
        <dbReference type="ChEBI" id="CHEBI:15378"/>
        <dbReference type="ChEBI" id="CHEBI:15379"/>
        <dbReference type="ChEBI" id="CHEBI:17879"/>
        <dbReference type="ChEBI" id="CHEBI:36241"/>
        <dbReference type="ChEBI" id="CHEBI:57783"/>
        <dbReference type="ChEBI" id="CHEBI:58349"/>
        <dbReference type="EC" id="1.14.13.33"/>
    </reaction>
</comment>
<comment type="cofactor">
    <cofactor evidence="5">
        <name>FAD</name>
        <dbReference type="ChEBI" id="CHEBI:57692"/>
    </cofactor>
    <text evidence="1">Binds 1 FAD per subunit.</text>
</comment>
<comment type="similarity">
    <text evidence="4">Belongs to the aromatic-ring hydroxylase family.</text>
</comment>